<evidence type="ECO:0000255" key="1">
    <source>
        <dbReference type="HAMAP-Rule" id="MF_01559"/>
    </source>
</evidence>
<name>LLDD_PSEPG</name>
<dbReference type="EC" id="1.1.-.-" evidence="1"/>
<dbReference type="EMBL" id="CP000926">
    <property type="protein sequence ID" value="ABZ00624.1"/>
    <property type="molecule type" value="Genomic_DNA"/>
</dbReference>
<dbReference type="RefSeq" id="WP_012274264.1">
    <property type="nucleotide sequence ID" value="NC_010322.1"/>
</dbReference>
<dbReference type="SMR" id="B0KIT4"/>
<dbReference type="KEGG" id="ppg:PputGB1_4737"/>
<dbReference type="eggNOG" id="COG1304">
    <property type="taxonomic scope" value="Bacteria"/>
</dbReference>
<dbReference type="HOGENOM" id="CLU_020639_0_0_6"/>
<dbReference type="Proteomes" id="UP000002157">
    <property type="component" value="Chromosome"/>
</dbReference>
<dbReference type="GO" id="GO:0005886">
    <property type="term" value="C:plasma membrane"/>
    <property type="evidence" value="ECO:0007669"/>
    <property type="project" value="UniProtKB-SubCell"/>
</dbReference>
<dbReference type="GO" id="GO:0010181">
    <property type="term" value="F:FMN binding"/>
    <property type="evidence" value="ECO:0007669"/>
    <property type="project" value="InterPro"/>
</dbReference>
<dbReference type="GO" id="GO:0004459">
    <property type="term" value="F:L-lactate dehydrogenase activity"/>
    <property type="evidence" value="ECO:0007669"/>
    <property type="project" value="UniProtKB-UniRule"/>
</dbReference>
<dbReference type="GO" id="GO:0009060">
    <property type="term" value="P:aerobic respiration"/>
    <property type="evidence" value="ECO:0007669"/>
    <property type="project" value="TreeGrafter"/>
</dbReference>
<dbReference type="GO" id="GO:0006089">
    <property type="term" value="P:lactate metabolic process"/>
    <property type="evidence" value="ECO:0007669"/>
    <property type="project" value="UniProtKB-UniRule"/>
</dbReference>
<dbReference type="CDD" id="cd02809">
    <property type="entry name" value="alpha_hydroxyacid_oxid_FMN"/>
    <property type="match status" value="1"/>
</dbReference>
<dbReference type="FunFam" id="3.20.20.70:FF:000029">
    <property type="entry name" value="L-lactate dehydrogenase"/>
    <property type="match status" value="1"/>
</dbReference>
<dbReference type="Gene3D" id="3.20.20.70">
    <property type="entry name" value="Aldolase class I"/>
    <property type="match status" value="1"/>
</dbReference>
<dbReference type="HAMAP" id="MF_01559">
    <property type="entry name" value="L_lact_dehydr"/>
    <property type="match status" value="1"/>
</dbReference>
<dbReference type="InterPro" id="IPR013785">
    <property type="entry name" value="Aldolase_TIM"/>
</dbReference>
<dbReference type="InterPro" id="IPR012133">
    <property type="entry name" value="Alpha-hydoxy_acid_DH_FMN"/>
</dbReference>
<dbReference type="InterPro" id="IPR000262">
    <property type="entry name" value="FMN-dep_DH"/>
</dbReference>
<dbReference type="InterPro" id="IPR037396">
    <property type="entry name" value="FMN_HAD"/>
</dbReference>
<dbReference type="InterPro" id="IPR008259">
    <property type="entry name" value="FMN_hydac_DH_AS"/>
</dbReference>
<dbReference type="InterPro" id="IPR020920">
    <property type="entry name" value="LldD"/>
</dbReference>
<dbReference type="NCBIfam" id="NF033901">
    <property type="entry name" value="L_lactate_LldD"/>
    <property type="match status" value="1"/>
</dbReference>
<dbReference type="NCBIfam" id="NF008398">
    <property type="entry name" value="PRK11197.1"/>
    <property type="match status" value="1"/>
</dbReference>
<dbReference type="PANTHER" id="PTHR10578:SF85">
    <property type="entry name" value="L-LACTATE DEHYDROGENASE"/>
    <property type="match status" value="1"/>
</dbReference>
<dbReference type="PANTHER" id="PTHR10578">
    <property type="entry name" value="S -2-HYDROXY-ACID OXIDASE-RELATED"/>
    <property type="match status" value="1"/>
</dbReference>
<dbReference type="Pfam" id="PF01070">
    <property type="entry name" value="FMN_dh"/>
    <property type="match status" value="1"/>
</dbReference>
<dbReference type="PIRSF" id="PIRSF000138">
    <property type="entry name" value="Al-hdrx_acd_dh"/>
    <property type="match status" value="1"/>
</dbReference>
<dbReference type="SUPFAM" id="SSF51395">
    <property type="entry name" value="FMN-linked oxidoreductases"/>
    <property type="match status" value="1"/>
</dbReference>
<dbReference type="PROSITE" id="PS00557">
    <property type="entry name" value="FMN_HYDROXY_ACID_DH_1"/>
    <property type="match status" value="1"/>
</dbReference>
<dbReference type="PROSITE" id="PS51349">
    <property type="entry name" value="FMN_HYDROXY_ACID_DH_2"/>
    <property type="match status" value="1"/>
</dbReference>
<sequence>MIISASTDYRAAAQRKLPPFLFHYADGGAYAEHTLRHNVSDLASIALRQRVLNNMSELSLSTRLFDETLSMPVALAPVGLTGMYARRGEVQAARAAAAHGIPFTMSTVSVCPIEEVAPAIDRPMWFQLYVLKDRGFMRNALERAKAAGVKTLVFTVDMPVPGARYRDAHSGMSGKNGPLRRVLQAMTHPEWAWDVGVMGRPHDLGNISKYRGNPTGLADYIGWLGNNFDPSISWKDLEWIREYWDGPMIIKGILDADDARDAVKFGADGIVVSNHGGRQLDGVLSSARALPAIADAVKGDLKILADSGIRSGLDVVRMIALGADTVLIGRAFLYALAVHGQAGVKNLLELFEKEMRVAMVLTGAKSISEITRDSLVRELGA</sequence>
<gene>
    <name evidence="1" type="primary">lldD</name>
    <name type="ordered locus">PputGB1_4737</name>
</gene>
<protein>
    <recommendedName>
        <fullName evidence="1">L-lactate dehydrogenase</fullName>
        <ecNumber evidence="1">1.1.-.-</ecNumber>
    </recommendedName>
</protein>
<organism>
    <name type="scientific">Pseudomonas putida (strain GB-1)</name>
    <dbReference type="NCBI Taxonomy" id="76869"/>
    <lineage>
        <taxon>Bacteria</taxon>
        <taxon>Pseudomonadati</taxon>
        <taxon>Pseudomonadota</taxon>
        <taxon>Gammaproteobacteria</taxon>
        <taxon>Pseudomonadales</taxon>
        <taxon>Pseudomonadaceae</taxon>
        <taxon>Pseudomonas</taxon>
    </lineage>
</organism>
<proteinExistence type="inferred from homology"/>
<accession>B0KIT4</accession>
<feature type="chain" id="PRO_0000383435" description="L-lactate dehydrogenase">
    <location>
        <begin position="1"/>
        <end position="381"/>
    </location>
</feature>
<feature type="domain" description="FMN hydroxy acid dehydrogenase" evidence="1">
    <location>
        <begin position="1"/>
        <end position="380"/>
    </location>
</feature>
<feature type="active site" description="Proton acceptor" evidence="1">
    <location>
        <position position="275"/>
    </location>
</feature>
<feature type="binding site" evidence="1">
    <location>
        <position position="24"/>
    </location>
    <ligand>
        <name>substrate</name>
    </ligand>
</feature>
<feature type="binding site" evidence="1">
    <location>
        <position position="106"/>
    </location>
    <ligand>
        <name>FMN</name>
        <dbReference type="ChEBI" id="CHEBI:58210"/>
    </ligand>
</feature>
<feature type="binding site" evidence="1">
    <location>
        <position position="127"/>
    </location>
    <ligand>
        <name>FMN</name>
        <dbReference type="ChEBI" id="CHEBI:58210"/>
    </ligand>
</feature>
<feature type="binding site" evidence="1">
    <location>
        <position position="129"/>
    </location>
    <ligand>
        <name>substrate</name>
    </ligand>
</feature>
<feature type="binding site" evidence="1">
    <location>
        <position position="155"/>
    </location>
    <ligand>
        <name>FMN</name>
        <dbReference type="ChEBI" id="CHEBI:58210"/>
    </ligand>
</feature>
<feature type="binding site" evidence="1">
    <location>
        <position position="164"/>
    </location>
    <ligand>
        <name>substrate</name>
    </ligand>
</feature>
<feature type="binding site" evidence="1">
    <location>
        <position position="251"/>
    </location>
    <ligand>
        <name>FMN</name>
        <dbReference type="ChEBI" id="CHEBI:58210"/>
    </ligand>
</feature>
<feature type="binding site" evidence="1">
    <location>
        <position position="278"/>
    </location>
    <ligand>
        <name>substrate</name>
    </ligand>
</feature>
<feature type="binding site" evidence="1">
    <location>
        <begin position="306"/>
        <end position="330"/>
    </location>
    <ligand>
        <name>FMN</name>
        <dbReference type="ChEBI" id="CHEBI:58210"/>
    </ligand>
</feature>
<keyword id="KW-0997">Cell inner membrane</keyword>
<keyword id="KW-1003">Cell membrane</keyword>
<keyword id="KW-0285">Flavoprotein</keyword>
<keyword id="KW-0288">FMN</keyword>
<keyword id="KW-0472">Membrane</keyword>
<keyword id="KW-0560">Oxidoreductase</keyword>
<reference key="1">
    <citation type="submission" date="2008-01" db="EMBL/GenBank/DDBJ databases">
        <title>Complete sequence of Pseudomonas putida GB-1.</title>
        <authorList>
            <consortium name="US DOE Joint Genome Institute"/>
            <person name="Copeland A."/>
            <person name="Lucas S."/>
            <person name="Lapidus A."/>
            <person name="Barry K."/>
            <person name="Glavina del Rio T."/>
            <person name="Dalin E."/>
            <person name="Tice H."/>
            <person name="Pitluck S."/>
            <person name="Bruce D."/>
            <person name="Goodwin L."/>
            <person name="Chertkov O."/>
            <person name="Brettin T."/>
            <person name="Detter J.C."/>
            <person name="Han C."/>
            <person name="Kuske C.R."/>
            <person name="Schmutz J."/>
            <person name="Larimer F."/>
            <person name="Land M."/>
            <person name="Hauser L."/>
            <person name="Kyrpides N."/>
            <person name="Kim E."/>
            <person name="McCarthy J.K."/>
            <person name="Richardson P."/>
        </authorList>
    </citation>
    <scope>NUCLEOTIDE SEQUENCE [LARGE SCALE GENOMIC DNA]</scope>
    <source>
        <strain>GB-1</strain>
    </source>
</reference>
<comment type="function">
    <text evidence="1">Catalyzes the conversion of L-lactate to pyruvate. Is coupled to the respiratory chain.</text>
</comment>
<comment type="catalytic activity">
    <reaction evidence="1">
        <text>(S)-lactate + A = pyruvate + AH2</text>
        <dbReference type="Rhea" id="RHEA:45816"/>
        <dbReference type="ChEBI" id="CHEBI:13193"/>
        <dbReference type="ChEBI" id="CHEBI:15361"/>
        <dbReference type="ChEBI" id="CHEBI:16651"/>
        <dbReference type="ChEBI" id="CHEBI:17499"/>
    </reaction>
</comment>
<comment type="cofactor">
    <cofactor evidence="1">
        <name>FMN</name>
        <dbReference type="ChEBI" id="CHEBI:58210"/>
    </cofactor>
</comment>
<comment type="subunit">
    <text evidence="1">Homotetramer.</text>
</comment>
<comment type="subcellular location">
    <subcellularLocation>
        <location evidence="1">Cell inner membrane</location>
        <topology evidence="1">Peripheral membrane protein</topology>
    </subcellularLocation>
</comment>
<comment type="similarity">
    <text evidence="1">Belongs to the FMN-dependent alpha-hydroxy acid dehydrogenase family.</text>
</comment>